<feature type="chain" id="PRO_0000410490" description="Sarcoplasmic calcium-binding protein">
    <location>
        <begin position="1" status="less than"/>
        <end position="8" status="greater than"/>
    </location>
</feature>
<feature type="non-terminal residue" evidence="2">
    <location>
        <position position="1"/>
    </location>
</feature>
<feature type="non-terminal residue" evidence="2">
    <location>
        <position position="8"/>
    </location>
</feature>
<protein>
    <recommendedName>
        <fullName evidence="2">Sarcoplasmic calcium-binding protein</fullName>
    </recommendedName>
</protein>
<sequence>VATVSLPR</sequence>
<proteinExistence type="evidence at protein level"/>
<keyword id="KW-0020">Allergen</keyword>
<keyword id="KW-0903">Direct protein sequencing</keyword>
<keyword id="KW-0514">Muscle protein</keyword>
<name>SCP_CHIOP</name>
<accession>P86909</accession>
<evidence type="ECO:0000269" key="1">
    <source>
    </source>
</evidence>
<evidence type="ECO:0000303" key="2">
    <source>
    </source>
</evidence>
<evidence type="ECO:0000305" key="3"/>
<reference evidence="3" key="1">
    <citation type="journal article" date="2011" name="J. Proteomics">
        <title>Biomolecular characterization of allergenic proteins in snow crab (Chionoecetes opilio) and de novo sequencing of the second allergen arginine kinase using tandem mass spectrometry.</title>
        <authorList>
            <person name="Abdel Rahman A.M."/>
            <person name="Kamath S.D."/>
            <person name="Lopata A.L."/>
            <person name="Robinson J.J."/>
            <person name="Helleur R.J."/>
        </authorList>
    </citation>
    <scope>PROTEIN SEQUENCE</scope>
    <scope>IGE-BINDING</scope>
    <source>
        <tissue evidence="1">Muscle</tissue>
    </source>
</reference>
<organism>
    <name type="scientific">Chionoecetes opilio</name>
    <name type="common">Atlantic snow crab</name>
    <name type="synonym">Cancer opilio</name>
    <dbReference type="NCBI Taxonomy" id="41210"/>
    <lineage>
        <taxon>Eukaryota</taxon>
        <taxon>Metazoa</taxon>
        <taxon>Ecdysozoa</taxon>
        <taxon>Arthropoda</taxon>
        <taxon>Crustacea</taxon>
        <taxon>Multicrustacea</taxon>
        <taxon>Malacostraca</taxon>
        <taxon>Eumalacostraca</taxon>
        <taxon>Eucarida</taxon>
        <taxon>Decapoda</taxon>
        <taxon>Pleocyemata</taxon>
        <taxon>Brachyura</taxon>
        <taxon>Eubrachyura</taxon>
        <taxon>Majoidea</taxon>
        <taxon>Majidae</taxon>
        <taxon>Chionoecetes</taxon>
    </lineage>
</organism>
<comment type="function">
    <text evidence="3">Like parvalbumins, SCPs seem to be more abundant in fast contracting muscles, but no functional relationship can be established from this distribution.</text>
</comment>
<comment type="allergen">
    <text evidence="1 2">Causes an allergic reaction in human. Binds to IgE.</text>
</comment>
<comment type="miscellaneous">
    <text evidence="3">The sarcoplasmic calcium-binding proteins are abundant in the muscle of arthropods, mollusks, annelids, and protochordates.</text>
</comment>